<gene>
    <name type="primary">pis1</name>
    <name evidence="6" type="ORF">SPAC1D4.08</name>
</gene>
<dbReference type="EC" id="2.7.8.11" evidence="4"/>
<dbReference type="EMBL" id="CU329670">
    <property type="protein sequence ID" value="CAK9837236.1"/>
    <property type="molecule type" value="Genomic_DNA"/>
</dbReference>
<dbReference type="PIR" id="T38049">
    <property type="entry name" value="T38049"/>
</dbReference>
<dbReference type="SMR" id="Q10153"/>
<dbReference type="BioGRID" id="278946">
    <property type="interactions" value="3"/>
</dbReference>
<dbReference type="FunCoup" id="Q10153">
    <property type="interactions" value="577"/>
</dbReference>
<dbReference type="STRING" id="284812.Q10153"/>
<dbReference type="PaxDb" id="4896-SPAC1D4.08.1"/>
<dbReference type="EnsemblFungi" id="SPAC1D4.08.1">
    <property type="protein sequence ID" value="SPAC1D4.08.1:pep"/>
    <property type="gene ID" value="SPAC1D4.08"/>
</dbReference>
<dbReference type="PomBase" id="SPAC1D4.08">
    <property type="gene designation" value="pis1"/>
</dbReference>
<dbReference type="VEuPathDB" id="FungiDB:SPAC1D4.08"/>
<dbReference type="eggNOG" id="KOG3240">
    <property type="taxonomic scope" value="Eukaryota"/>
</dbReference>
<dbReference type="InParanoid" id="Q10153"/>
<dbReference type="Reactome" id="R-SPO-1483226">
    <property type="pathway name" value="Synthesis of PI"/>
</dbReference>
<dbReference type="PRO" id="PR:Q10153"/>
<dbReference type="Proteomes" id="UP000002485">
    <property type="component" value="Chromosome I"/>
</dbReference>
<dbReference type="GO" id="GO:0005789">
    <property type="term" value="C:endoplasmic reticulum membrane"/>
    <property type="evidence" value="ECO:0000303"/>
    <property type="project" value="PomBase"/>
</dbReference>
<dbReference type="GO" id="GO:0005794">
    <property type="term" value="C:Golgi apparatus"/>
    <property type="evidence" value="ECO:0000318"/>
    <property type="project" value="GO_Central"/>
</dbReference>
<dbReference type="GO" id="GO:0000139">
    <property type="term" value="C:Golgi membrane"/>
    <property type="evidence" value="ECO:0007669"/>
    <property type="project" value="UniProtKB-SubCell"/>
</dbReference>
<dbReference type="GO" id="GO:0016020">
    <property type="term" value="C:membrane"/>
    <property type="evidence" value="ECO:0007669"/>
    <property type="project" value="UniProtKB-UniRule"/>
</dbReference>
<dbReference type="GO" id="GO:0005741">
    <property type="term" value="C:mitochondrial outer membrane"/>
    <property type="evidence" value="ECO:0000266"/>
    <property type="project" value="PomBase"/>
</dbReference>
<dbReference type="GO" id="GO:0005524">
    <property type="term" value="F:ATP binding"/>
    <property type="evidence" value="ECO:0000255"/>
    <property type="project" value="PomBase"/>
</dbReference>
<dbReference type="GO" id="GO:0003881">
    <property type="term" value="F:CDP-diacylglycerol-inositol 3-phosphatidyltransferase activity"/>
    <property type="evidence" value="ECO:0007669"/>
    <property type="project" value="UniProtKB-UniRule"/>
</dbReference>
<dbReference type="GO" id="GO:0046872">
    <property type="term" value="F:metal ion binding"/>
    <property type="evidence" value="ECO:0007669"/>
    <property type="project" value="UniProtKB-KW"/>
</dbReference>
<dbReference type="GO" id="GO:0006661">
    <property type="term" value="P:phosphatidylinositol biosynthetic process"/>
    <property type="evidence" value="ECO:0000269"/>
    <property type="project" value="PomBase"/>
</dbReference>
<dbReference type="GO" id="GO:0008654">
    <property type="term" value="P:phospholipid biosynthetic process"/>
    <property type="evidence" value="ECO:0007669"/>
    <property type="project" value="UniProtKB-KW"/>
</dbReference>
<dbReference type="FunFam" id="1.20.120.1760:FF:000011">
    <property type="entry name" value="Cdp-diacylglycerol-inositol 3-phosphatidyltransferase pis"/>
    <property type="match status" value="1"/>
</dbReference>
<dbReference type="Gene3D" id="1.20.120.1760">
    <property type="match status" value="1"/>
</dbReference>
<dbReference type="InterPro" id="IPR000462">
    <property type="entry name" value="CDP-OH_P_trans"/>
</dbReference>
<dbReference type="InterPro" id="IPR043130">
    <property type="entry name" value="CDP-OH_PTrfase_TM_dom"/>
</dbReference>
<dbReference type="InterPro" id="IPR048254">
    <property type="entry name" value="CDP_ALCOHOL_P_TRANSF_CS"/>
</dbReference>
<dbReference type="InterPro" id="IPR014387">
    <property type="entry name" value="CDP_diag_ino_3_P_euk"/>
</dbReference>
<dbReference type="PANTHER" id="PTHR15362:SF4">
    <property type="entry name" value="CDP-DIACYLGLYCEROL--INOSITOL 3-PHOSPHATIDYLTRANSFERASE"/>
    <property type="match status" value="1"/>
</dbReference>
<dbReference type="PANTHER" id="PTHR15362">
    <property type="entry name" value="PHOSPHATIDYLINOSITOL SYNTHASE"/>
    <property type="match status" value="1"/>
</dbReference>
<dbReference type="Pfam" id="PF01066">
    <property type="entry name" value="CDP-OH_P_transf"/>
    <property type="match status" value="1"/>
</dbReference>
<dbReference type="PIRSF" id="PIRSF000848">
    <property type="entry name" value="CDP_diag_ino_3_P"/>
    <property type="match status" value="1"/>
</dbReference>
<dbReference type="PROSITE" id="PS00379">
    <property type="entry name" value="CDP_ALCOHOL_P_TRANSF"/>
    <property type="match status" value="1"/>
</dbReference>
<comment type="function">
    <text evidence="4">Catalyzes the synthesis of phosphatidylinositol (PtdIns).</text>
</comment>
<comment type="catalytic activity">
    <reaction evidence="4">
        <text>a CDP-1,2-diacyl-sn-glycerol + myo-inositol = a 1,2-diacyl-sn-glycero-3-phospho-(1D-myo-inositol) + CMP + H(+)</text>
        <dbReference type="Rhea" id="RHEA:11580"/>
        <dbReference type="ChEBI" id="CHEBI:15378"/>
        <dbReference type="ChEBI" id="CHEBI:17268"/>
        <dbReference type="ChEBI" id="CHEBI:57880"/>
        <dbReference type="ChEBI" id="CHEBI:58332"/>
        <dbReference type="ChEBI" id="CHEBI:60377"/>
        <dbReference type="EC" id="2.7.8.11"/>
    </reaction>
</comment>
<comment type="cofactor">
    <cofactor evidence="1">
        <name>Mn(2+)</name>
        <dbReference type="ChEBI" id="CHEBI:29035"/>
    </cofactor>
    <cofactor evidence="1">
        <name>Mg(2+)</name>
        <dbReference type="ChEBI" id="CHEBI:18420"/>
    </cofactor>
    <text evidence="1">Divalent metal cations; Mn(2+) or Mg(2+).</text>
</comment>
<comment type="subcellular location">
    <subcellularLocation>
        <location evidence="1">Microsome membrane</location>
        <topology evidence="1">Multi-pass membrane protein</topology>
    </subcellularLocation>
    <subcellularLocation>
        <location evidence="1">Endoplasmic reticulum membrane</location>
        <topology evidence="1">Multi-pass membrane protein</topology>
    </subcellularLocation>
    <subcellularLocation>
        <location evidence="1">Golgi apparatus membrane</location>
        <topology evidence="1">Multi-pass membrane protein</topology>
    </subcellularLocation>
    <subcellularLocation>
        <location evidence="1">Mitochondrion outer membrane</location>
        <topology evidence="1">Multi-pass membrane protein</topology>
    </subcellularLocation>
</comment>
<comment type="induction">
    <text evidence="4">Expression is regulated by both growth phase and inositol. Expressed in the exponential phase of growth. Addition of inositol to inositol-starved cells results in an immediate increase in pis1 expression.</text>
</comment>
<comment type="similarity">
    <text evidence="5">Belongs to the CDP-alcohol phosphatidyltransferase class-I family.</text>
</comment>
<sequence>MGKNEQKDPNVYFFVPNLIGFTRVFLVLISLYFMSWHPNYCTIVYLYSSLLDAFDGWAARKLHQATNFGAILDMVTDRCATSCLLCFLCAAYPKYAIIFQLLVSLDLASHYMHMYSTLHQGASSHKTVTKKHNWMLRLYYGNNKVLFIFCAANEMFFVALYLLSFTPRTPPKLGYLPVPSFIYSTGELPLSYPTLLAVLCGPICLAKQIINVVQLVNAANALVKMDVEQRRAAKKLQ</sequence>
<reference key="1">
    <citation type="journal article" date="2002" name="Nature">
        <title>The genome sequence of Schizosaccharomyces pombe.</title>
        <authorList>
            <person name="Wood V."/>
            <person name="Gwilliam R."/>
            <person name="Rajandream M.A."/>
            <person name="Lyne M.H."/>
            <person name="Lyne R."/>
            <person name="Stewart A."/>
            <person name="Sgouros J.G."/>
            <person name="Peat N."/>
            <person name="Hayles J."/>
            <person name="Baker S.G."/>
            <person name="Basham D."/>
            <person name="Bowman S."/>
            <person name="Brooks K."/>
            <person name="Brown D."/>
            <person name="Brown S."/>
            <person name="Chillingworth T."/>
            <person name="Churcher C.M."/>
            <person name="Collins M."/>
            <person name="Connor R."/>
            <person name="Cronin A."/>
            <person name="Davis P."/>
            <person name="Feltwell T."/>
            <person name="Fraser A."/>
            <person name="Gentles S."/>
            <person name="Goble A."/>
            <person name="Hamlin N."/>
            <person name="Harris D.E."/>
            <person name="Hidalgo J."/>
            <person name="Hodgson G."/>
            <person name="Holroyd S."/>
            <person name="Hornsby T."/>
            <person name="Howarth S."/>
            <person name="Huckle E.J."/>
            <person name="Hunt S."/>
            <person name="Jagels K."/>
            <person name="James K.D."/>
            <person name="Jones L."/>
            <person name="Jones M."/>
            <person name="Leather S."/>
            <person name="McDonald S."/>
            <person name="McLean J."/>
            <person name="Mooney P."/>
            <person name="Moule S."/>
            <person name="Mungall K.L."/>
            <person name="Murphy L.D."/>
            <person name="Niblett D."/>
            <person name="Odell C."/>
            <person name="Oliver K."/>
            <person name="O'Neil S."/>
            <person name="Pearson D."/>
            <person name="Quail M.A."/>
            <person name="Rabbinowitsch E."/>
            <person name="Rutherford K.M."/>
            <person name="Rutter S."/>
            <person name="Saunders D."/>
            <person name="Seeger K."/>
            <person name="Sharp S."/>
            <person name="Skelton J."/>
            <person name="Simmonds M.N."/>
            <person name="Squares R."/>
            <person name="Squares S."/>
            <person name="Stevens K."/>
            <person name="Taylor K."/>
            <person name="Taylor R.G."/>
            <person name="Tivey A."/>
            <person name="Walsh S.V."/>
            <person name="Warren T."/>
            <person name="Whitehead S."/>
            <person name="Woodward J.R."/>
            <person name="Volckaert G."/>
            <person name="Aert R."/>
            <person name="Robben J."/>
            <person name="Grymonprez B."/>
            <person name="Weltjens I."/>
            <person name="Vanstreels E."/>
            <person name="Rieger M."/>
            <person name="Schaefer M."/>
            <person name="Mueller-Auer S."/>
            <person name="Gabel C."/>
            <person name="Fuchs M."/>
            <person name="Duesterhoeft A."/>
            <person name="Fritzc C."/>
            <person name="Holzer E."/>
            <person name="Moestl D."/>
            <person name="Hilbert H."/>
            <person name="Borzym K."/>
            <person name="Langer I."/>
            <person name="Beck A."/>
            <person name="Lehrach H."/>
            <person name="Reinhardt R."/>
            <person name="Pohl T.M."/>
            <person name="Eger P."/>
            <person name="Zimmermann W."/>
            <person name="Wedler H."/>
            <person name="Wambutt R."/>
            <person name="Purnelle B."/>
            <person name="Goffeau A."/>
            <person name="Cadieu E."/>
            <person name="Dreano S."/>
            <person name="Gloux S."/>
            <person name="Lelaure V."/>
            <person name="Mottier S."/>
            <person name="Galibert F."/>
            <person name="Aves S.J."/>
            <person name="Xiang Z."/>
            <person name="Hunt C."/>
            <person name="Moore K."/>
            <person name="Hurst S.M."/>
            <person name="Lucas M."/>
            <person name="Rochet M."/>
            <person name="Gaillardin C."/>
            <person name="Tallada V.A."/>
            <person name="Garzon A."/>
            <person name="Thode G."/>
            <person name="Daga R.R."/>
            <person name="Cruzado L."/>
            <person name="Jimenez J."/>
            <person name="Sanchez M."/>
            <person name="del Rey F."/>
            <person name="Benito J."/>
            <person name="Dominguez A."/>
            <person name="Revuelta J.L."/>
            <person name="Moreno S."/>
            <person name="Armstrong J."/>
            <person name="Forsburg S.L."/>
            <person name="Cerutti L."/>
            <person name="Lowe T."/>
            <person name="McCombie W.R."/>
            <person name="Paulsen I."/>
            <person name="Potashkin J."/>
            <person name="Shpakovski G.V."/>
            <person name="Ussery D."/>
            <person name="Barrell B.G."/>
            <person name="Nurse P."/>
        </authorList>
    </citation>
    <scope>NUCLEOTIDE SEQUENCE [LARGE SCALE GENOMIC DNA]</scope>
    <source>
        <strain>972 / ATCC 24843</strain>
    </source>
</reference>
<reference key="2">
    <citation type="journal article" date="2014" name="Nat. Struct. Mol. Biol.">
        <title>The translational landscape of fission-yeast meiosis and sporulation.</title>
        <authorList>
            <person name="Duncan C.D."/>
            <person name="Mata J."/>
        </authorList>
    </citation>
    <scope>GENE MODEL REVISION</scope>
</reference>
<reference key="3">
    <citation type="journal article" date="1992" name="J. Bacteriol.">
        <title>Regulation of CDP-diacylglycerol synthesis and utilization by inositol and choline in Schizosaccharomyces pombe.</title>
        <authorList>
            <person name="Gaynor P.M."/>
            <person name="Greenberg M.L."/>
        </authorList>
    </citation>
    <scope>FUNCTION</scope>
    <scope>CATALYTIC ACTIVITY</scope>
    <scope>INDUCTION</scope>
</reference>
<organism>
    <name type="scientific">Schizosaccharomyces pombe (strain 972 / ATCC 24843)</name>
    <name type="common">Fission yeast</name>
    <dbReference type="NCBI Taxonomy" id="284812"/>
    <lineage>
        <taxon>Eukaryota</taxon>
        <taxon>Fungi</taxon>
        <taxon>Dikarya</taxon>
        <taxon>Ascomycota</taxon>
        <taxon>Taphrinomycotina</taxon>
        <taxon>Schizosaccharomycetes</taxon>
        <taxon>Schizosaccharomycetales</taxon>
        <taxon>Schizosaccharomycetaceae</taxon>
        <taxon>Schizosaccharomyces</taxon>
    </lineage>
</organism>
<keyword id="KW-0256">Endoplasmic reticulum</keyword>
<keyword id="KW-0333">Golgi apparatus</keyword>
<keyword id="KW-0444">Lipid biosynthesis</keyword>
<keyword id="KW-0443">Lipid metabolism</keyword>
<keyword id="KW-0460">Magnesium</keyword>
<keyword id="KW-0472">Membrane</keyword>
<keyword id="KW-0479">Metal-binding</keyword>
<keyword id="KW-0492">Microsome</keyword>
<keyword id="KW-0496">Mitochondrion</keyword>
<keyword id="KW-1000">Mitochondrion outer membrane</keyword>
<keyword id="KW-0594">Phospholipid biosynthesis</keyword>
<keyword id="KW-1208">Phospholipid metabolism</keyword>
<keyword id="KW-1185">Reference proteome</keyword>
<keyword id="KW-0808">Transferase</keyword>
<keyword id="KW-0812">Transmembrane</keyword>
<keyword id="KW-1133">Transmembrane helix</keyword>
<accession>Q10153</accession>
<accession>A0AAN2H5Y5</accession>
<protein>
    <recommendedName>
        <fullName evidence="5">CDP-diacylglycerol--inositol 3-phosphatidyltransferase</fullName>
        <ecNumber evidence="4">2.7.8.11</ecNumber>
    </recommendedName>
    <alternativeName>
        <fullName>Phosphatidylinositol synthase</fullName>
        <shortName>PI synthase</shortName>
        <shortName>PtdIns synthase</shortName>
    </alternativeName>
</protein>
<feature type="chain" id="PRO_0000056823" description="CDP-diacylglycerol--inositol 3-phosphatidyltransferase">
    <location>
        <begin position="1"/>
        <end position="237"/>
    </location>
</feature>
<feature type="topological domain" description="Cytoplasmic" evidence="1">
    <location>
        <begin position="1"/>
        <end position="12"/>
    </location>
</feature>
<feature type="transmembrane region" description="Helical" evidence="3">
    <location>
        <begin position="13"/>
        <end position="33"/>
    </location>
</feature>
<feature type="topological domain" description="Lumenal" evidence="1">
    <location>
        <begin position="34"/>
        <end position="41"/>
    </location>
</feature>
<feature type="transmembrane region" description="Helical" evidence="3">
    <location>
        <begin position="42"/>
        <end position="62"/>
    </location>
</feature>
<feature type="topological domain" description="Cytoplasmic" evidence="1">
    <location>
        <begin position="63"/>
        <end position="71"/>
    </location>
</feature>
<feature type="transmembrane region" description="Helical" evidence="3">
    <location>
        <begin position="72"/>
        <end position="92"/>
    </location>
</feature>
<feature type="topological domain" description="Lumenal" evidence="1">
    <location>
        <begin position="93"/>
        <end position="94"/>
    </location>
</feature>
<feature type="transmembrane region" description="Helical" evidence="3">
    <location>
        <begin position="95"/>
        <end position="115"/>
    </location>
</feature>
<feature type="topological domain" description="Cytoplasmic" evidence="1">
    <location>
        <begin position="116"/>
        <end position="144"/>
    </location>
</feature>
<feature type="transmembrane region" description="Helical" evidence="3">
    <location>
        <begin position="145"/>
        <end position="165"/>
    </location>
</feature>
<feature type="topological domain" description="Lumenal" evidence="1">
    <location>
        <begin position="166"/>
        <end position="185"/>
    </location>
</feature>
<feature type="transmembrane region" description="Helical" evidence="3">
    <location>
        <begin position="186"/>
        <end position="206"/>
    </location>
</feature>
<feature type="topological domain" description="Cytoplasmic" evidence="1">
    <location>
        <begin position="207"/>
        <end position="237"/>
    </location>
</feature>
<feature type="active site" description="Proton acceptor" evidence="2">
    <location>
        <position position="77"/>
    </location>
</feature>
<feature type="binding site" evidence="2">
    <location>
        <position position="52"/>
    </location>
    <ligand>
        <name>Mg(2+)</name>
        <dbReference type="ChEBI" id="CHEBI:18420"/>
        <label>1</label>
    </ligand>
</feature>
<feature type="binding site" evidence="2">
    <location>
        <position position="52"/>
    </location>
    <ligand>
        <name>Mg(2+)</name>
        <dbReference type="ChEBI" id="CHEBI:18420"/>
        <label>2</label>
    </ligand>
</feature>
<feature type="binding site" evidence="2">
    <location>
        <position position="55"/>
    </location>
    <ligand>
        <name>Mg(2+)</name>
        <dbReference type="ChEBI" id="CHEBI:18420"/>
        <label>1</label>
    </ligand>
</feature>
<feature type="binding site" evidence="2">
    <location>
        <position position="56"/>
    </location>
    <ligand>
        <name>a CDP-1,2-diacyl-sn-glycerol</name>
        <dbReference type="ChEBI" id="CHEBI:58332"/>
    </ligand>
</feature>
<feature type="binding site" evidence="2">
    <location>
        <position position="60"/>
    </location>
    <ligand>
        <name>a CDP-1,2-diacyl-sn-glycerol</name>
        <dbReference type="ChEBI" id="CHEBI:58332"/>
    </ligand>
</feature>
<feature type="binding site" evidence="2">
    <location>
        <position position="66"/>
    </location>
    <ligand>
        <name>a CDP-1,2-diacyl-sn-glycerol</name>
        <dbReference type="ChEBI" id="CHEBI:58332"/>
    </ligand>
</feature>
<feature type="binding site" evidence="2">
    <location>
        <position position="73"/>
    </location>
    <ligand>
        <name>Mg(2+)</name>
        <dbReference type="ChEBI" id="CHEBI:18420"/>
        <label>1</label>
    </ligand>
</feature>
<feature type="binding site" evidence="2">
    <location>
        <position position="73"/>
    </location>
    <ligand>
        <name>Mg(2+)</name>
        <dbReference type="ChEBI" id="CHEBI:18420"/>
        <label>2</label>
    </ligand>
</feature>
<feature type="binding site" evidence="2">
    <location>
        <position position="77"/>
    </location>
    <ligand>
        <name>Mg(2+)</name>
        <dbReference type="ChEBI" id="CHEBI:18420"/>
        <label>2</label>
    </ligand>
</feature>
<evidence type="ECO:0000250" key="1">
    <source>
        <dbReference type="UniProtKB" id="P06197"/>
    </source>
</evidence>
<evidence type="ECO:0000250" key="2">
    <source>
        <dbReference type="UniProtKB" id="P9WPG7"/>
    </source>
</evidence>
<evidence type="ECO:0000255" key="3"/>
<evidence type="ECO:0000269" key="4">
    <source>
    </source>
</evidence>
<evidence type="ECO:0000305" key="5"/>
<evidence type="ECO:0000312" key="6">
    <source>
        <dbReference type="PomBase" id="SPAC1D4.08"/>
    </source>
</evidence>
<name>PIS_SCHPO</name>
<proteinExistence type="evidence at protein level"/>